<organism>
    <name type="scientific">Acanthamoeba polyphaga mimivirus</name>
    <name type="common">APMV</name>
    <dbReference type="NCBI Taxonomy" id="212035"/>
    <lineage>
        <taxon>Viruses</taxon>
        <taxon>Varidnaviria</taxon>
        <taxon>Bamfordvirae</taxon>
        <taxon>Nucleocytoviricota</taxon>
        <taxon>Megaviricetes</taxon>
        <taxon>Imitervirales</taxon>
        <taxon>Mimiviridae</taxon>
        <taxon>Megamimivirinae</taxon>
        <taxon>Mimivirus</taxon>
        <taxon>Mimivirus bradfordmassiliense</taxon>
    </lineage>
</organism>
<comment type="catalytic activity">
    <reaction>
        <text>ATP + H2O = ADP + phosphate + H(+)</text>
        <dbReference type="Rhea" id="RHEA:13065"/>
        <dbReference type="ChEBI" id="CHEBI:15377"/>
        <dbReference type="ChEBI" id="CHEBI:15378"/>
        <dbReference type="ChEBI" id="CHEBI:30616"/>
        <dbReference type="ChEBI" id="CHEBI:43474"/>
        <dbReference type="ChEBI" id="CHEBI:456216"/>
        <dbReference type="EC" id="3.6.4.13"/>
    </reaction>
</comment>
<comment type="similarity">
    <text evidence="4">Belongs to the DEAD box helicase family. DEAH subfamily.</text>
</comment>
<sequence length="1766" mass="208526">MALNTLINNNSWDILPKWIEYNDEHYKFLSRELINVVFPILRETDKQLLLDSIILVINMIHFKFGFGSIDKPDELLWHQLIQNNLLDSRAILNAMLPYINDNAKDDKKHRLRNLEDLYLEKDDRGQYVYTNSQYNRCIRRLETDGKISVFNRPCIREYFLDHLEILLMSIETSANKLYVNWVDVLPVKMSDFDTLDIYKQTVVKLNSYKSSSNQNSNQSNQESNESNQEPNESNQEINQESNRNTFNRIDLINNYIDPNSGLSYQDIYNTISNHLFHEIKNYKWLIYDIVIAEKPVSYLKYLENKFDFDELLEGRMWSQLDKSQTIRFQNQWNSFLNSSDTNDNTVLHHFYFFFSKYHKNSQKLIRQNKLVLNKDPDDEEDIEENVRITPETTQDARRGMSQVPIEEIYLFFSDQLTSFKKTWYFYTIQINKKEYVDSEDNIIITPKNIYNYCKSLVSYTNASGKFTQIPKYWYSLKPEFIEMILIRILDINDPIKNDWTKNNWFNINNYIRKFYPDTKEEDLPVMNYKLHSLIRNNIVDIIFESLIFHGILSNFKPNLTITDNSYIRASIGSTDDNKRTKFKHQQMAKQYFTGKTRTEYETNAYYYLTGQTYDQLKPLRNKTYHNFEKKYFDFLTSEQIWTFTYAMNWVSQLNFYHHYSNNRVLYITGATGVGKSTQVPKLLMYSQKMLDYNSNGKIICTQPRVPPTVENADTISRELGVPIRAYNKLYDKSVFTSNFYVQYKHQKEEHIDRQADYFLRIVTDGTLLEEMIGSPFLTRSIEDPYAVDNLGNQLDWVKTYSTGNVYDIVIVDEAHEHNANMDMILTLARDSIYVNNSTKLVIVSATMDDDEPIYRRYYRRINDNRTYPLSAFIDYNQLDRANMDRRIHISPPGATTQYVIRDFYLTDEESALINEKNFIDYGIKKTIELANSTTNGDILLFMTGQADIHKSIKAINAATPPNIVALGYYSELSEETKELIVKIHQTLASYTRYKEDVELDESEITRRVPKGTYTRAIIIATNVAEASITLKNLKYVVDTGYNKVVVYDPIDGVYDTWTLPISFSSAMQRRGRVGRLSSGDFYALYSLNKVINNKTAYKIADINIKDTMVKLIKSYPNDPFIISPMNDINQISNLVSIVNKRLTNNYVPEDLIYDILNNPRPYYDIINKQYLYIPDLTDISQYYTYYGKSSDIVLDEFDPNKINLSDYLRTNHDDYHFQQNHGAFYSRCYTGYDNYILEDQSLTFYIIHPDENIINRNLYTGQMDSLKIASSIKESYYYYLLKVNNIQEKSDLQRINFRNFQLIKYPLAMSEAELQMLIMNVPAKKSDLVIRYTNIVDSNINSYTEEYYSGLPNVNINDMTRVKSLLLINLGQIQSAVSLNILNNYNNILWYSYAIPYQLNHDVLAIMVMIDLASDINQWIDPSKSRCCLNKFLNQHFNKEGDIKFLWDLWKKIQPILIKNNLLNTNDINYLRSDFNRNKEKYLSEKKIPFNEFLLFDKLFNSGKLNTTDEFYYYVNGINFDFVMENNNVSRMIEILSENELLNKDKIIDFVSQYLSLNFTIYKQMWSHQYEIENKLNENSDNNKDIVEWVDKNLRFPNIITHPYNMPDDWDKILETYIRALSTNVVKNQGSYYLKMNNGVKIFPSRWSRFNPTEKTFLNNKSEFIIYHSNDSTDNKVNIMYLTPVQLKWILDANPIYYYYLIFDKNNIINKLKETDNIKEILQTISSVKPYYSIKSLIEYVDRMNNPTISRLIRSEIYGLDNSTKN</sequence>
<feature type="chain" id="PRO_0000253410" description="Putative ATP-dependent RNA helicase R366">
    <location>
        <begin position="1"/>
        <end position="1766"/>
    </location>
</feature>
<feature type="domain" description="Helicase ATP-binding" evidence="1">
    <location>
        <begin position="656"/>
        <end position="865"/>
    </location>
</feature>
<feature type="domain" description="Helicase C-terminal" evidence="2">
    <location>
        <begin position="947"/>
        <end position="1116"/>
    </location>
</feature>
<feature type="region of interest" description="Disordered" evidence="3">
    <location>
        <begin position="209"/>
        <end position="239"/>
    </location>
</feature>
<feature type="short sequence motif" description="DEAH box">
    <location>
        <begin position="812"/>
        <end position="815"/>
    </location>
</feature>
<feature type="compositionally biased region" description="Low complexity" evidence="3">
    <location>
        <begin position="210"/>
        <end position="239"/>
    </location>
</feature>
<feature type="binding site" evidence="1">
    <location>
        <begin position="669"/>
        <end position="676"/>
    </location>
    <ligand>
        <name>ATP</name>
        <dbReference type="ChEBI" id="CHEBI:30616"/>
    </ligand>
</feature>
<protein>
    <recommendedName>
        <fullName>Putative ATP-dependent RNA helicase R366</fullName>
        <ecNumber>3.6.4.13</ecNumber>
    </recommendedName>
</protein>
<dbReference type="EC" id="3.6.4.13"/>
<dbReference type="EMBL" id="AY653733">
    <property type="protein sequence ID" value="AAV50635.1"/>
    <property type="molecule type" value="Genomic_DNA"/>
</dbReference>
<dbReference type="SMR" id="Q5UR20"/>
<dbReference type="Proteomes" id="UP000001134">
    <property type="component" value="Genome"/>
</dbReference>
<dbReference type="GO" id="GO:0005524">
    <property type="term" value="F:ATP binding"/>
    <property type="evidence" value="ECO:0007669"/>
    <property type="project" value="UniProtKB-KW"/>
</dbReference>
<dbReference type="GO" id="GO:0016887">
    <property type="term" value="F:ATP hydrolysis activity"/>
    <property type="evidence" value="ECO:0007669"/>
    <property type="project" value="RHEA"/>
</dbReference>
<dbReference type="GO" id="GO:0003723">
    <property type="term" value="F:RNA binding"/>
    <property type="evidence" value="ECO:0007669"/>
    <property type="project" value="TreeGrafter"/>
</dbReference>
<dbReference type="GO" id="GO:0003724">
    <property type="term" value="F:RNA helicase activity"/>
    <property type="evidence" value="ECO:0007669"/>
    <property type="project" value="UniProtKB-EC"/>
</dbReference>
<dbReference type="CDD" id="cd18791">
    <property type="entry name" value="SF2_C_RHA"/>
    <property type="match status" value="1"/>
</dbReference>
<dbReference type="Gene3D" id="3.40.50.300">
    <property type="entry name" value="P-loop containing nucleotide triphosphate hydrolases"/>
    <property type="match status" value="2"/>
</dbReference>
<dbReference type="InterPro" id="IPR014001">
    <property type="entry name" value="Helicase_ATP-bd"/>
</dbReference>
<dbReference type="InterPro" id="IPR001650">
    <property type="entry name" value="Helicase_C-like"/>
</dbReference>
<dbReference type="InterPro" id="IPR027417">
    <property type="entry name" value="P-loop_NTPase"/>
</dbReference>
<dbReference type="PANTHER" id="PTHR18934">
    <property type="entry name" value="ATP-DEPENDENT RNA HELICASE"/>
    <property type="match status" value="1"/>
</dbReference>
<dbReference type="PANTHER" id="PTHR18934:SF91">
    <property type="entry name" value="PRE-MRNA-SPLICING FACTOR ATP-DEPENDENT RNA HELICASE PRP16"/>
    <property type="match status" value="1"/>
</dbReference>
<dbReference type="Pfam" id="PF00271">
    <property type="entry name" value="Helicase_C"/>
    <property type="match status" value="1"/>
</dbReference>
<dbReference type="SMART" id="SM00487">
    <property type="entry name" value="DEXDc"/>
    <property type="match status" value="1"/>
</dbReference>
<dbReference type="SMART" id="SM00490">
    <property type="entry name" value="HELICc"/>
    <property type="match status" value="1"/>
</dbReference>
<dbReference type="SUPFAM" id="SSF52540">
    <property type="entry name" value="P-loop containing nucleoside triphosphate hydrolases"/>
    <property type="match status" value="1"/>
</dbReference>
<dbReference type="PROSITE" id="PS51192">
    <property type="entry name" value="HELICASE_ATP_BIND_1"/>
    <property type="match status" value="1"/>
</dbReference>
<dbReference type="PROSITE" id="PS51194">
    <property type="entry name" value="HELICASE_CTER"/>
    <property type="match status" value="1"/>
</dbReference>
<organismHost>
    <name type="scientific">Acanthamoeba polyphaga</name>
    <name type="common">Amoeba</name>
    <dbReference type="NCBI Taxonomy" id="5757"/>
</organismHost>
<evidence type="ECO:0000255" key="1">
    <source>
        <dbReference type="PROSITE-ProRule" id="PRU00541"/>
    </source>
</evidence>
<evidence type="ECO:0000255" key="2">
    <source>
        <dbReference type="PROSITE-ProRule" id="PRU00542"/>
    </source>
</evidence>
<evidence type="ECO:0000256" key="3">
    <source>
        <dbReference type="SAM" id="MobiDB-lite"/>
    </source>
</evidence>
<evidence type="ECO:0000305" key="4"/>
<gene>
    <name type="ordered locus">MIMI_R366</name>
</gene>
<name>YR366_MIMIV</name>
<keyword id="KW-0067">ATP-binding</keyword>
<keyword id="KW-0347">Helicase</keyword>
<keyword id="KW-0378">Hydrolase</keyword>
<keyword id="KW-0547">Nucleotide-binding</keyword>
<keyword id="KW-1185">Reference proteome</keyword>
<accession>Q5UR20</accession>
<proteinExistence type="inferred from homology"/>
<reference key="1">
    <citation type="journal article" date="2004" name="Science">
        <title>The 1.2-megabase genome sequence of Mimivirus.</title>
        <authorList>
            <person name="Raoult D."/>
            <person name="Audic S."/>
            <person name="Robert C."/>
            <person name="Abergel C."/>
            <person name="Renesto P."/>
            <person name="Ogata H."/>
            <person name="La Scola B."/>
            <person name="Susan M."/>
            <person name="Claverie J.-M."/>
        </authorList>
    </citation>
    <scope>NUCLEOTIDE SEQUENCE [GENOMIC DNA]</scope>
    <source>
        <strain>Rowbotham-Bradford</strain>
    </source>
</reference>